<comment type="function">
    <text evidence="1">An L-glutamate ligase that catalyzes the ATP-dependent post-translational addition of glutamate residues to the C-terminus of ribosomal protein bS6 (RpsF). Is also able to catalyze the synthesis of poly-alpha-glutamate in vitro, via ATP hydrolysis from unprotected glutamate as substrate. The number of glutamate residues added to either RpsF or to poly-alpha-glutamate changes with pH.</text>
</comment>
<comment type="cofactor">
    <cofactor evidence="1">
        <name>Mg(2+)</name>
        <dbReference type="ChEBI" id="CHEBI:18420"/>
    </cofactor>
    <cofactor evidence="1">
        <name>Mn(2+)</name>
        <dbReference type="ChEBI" id="CHEBI:29035"/>
    </cofactor>
    <text evidence="1">Binds 2 magnesium or manganese ions per subunit.</text>
</comment>
<comment type="similarity">
    <text evidence="1">Belongs to the RimK family.</text>
</comment>
<sequence>MKIAILSRDGTLYSCKRLREAAMRRGHLVEILDPLSCYMNINPAASSIHYKGRRLPHFDAVIPRIGSAITFYGTAALRQFELLGSYPLNESVAITRARDKLRSLQLLARQGIDLPITGIAHSPDDTSDLIKMVGGAPLVVKLVEGTQGIGVVLAETRQAAESVIDAFRGLNAHILVQEYIAEAKGCDIRCLVVGNEVVAAIERCAKAGDFRSNLHRGGVASIATITPRERDIAIKAAQTLGLDVAGVDILRAARGPLVMEVNASPGLEGIEKTTGVDIAGRMIQWIERHATPEFCLKIGG</sequence>
<feature type="chain" id="PRO_1000194372" description="Ribosomal protein bS6--L-glutamate ligase">
    <location>
        <begin position="1"/>
        <end position="300"/>
    </location>
</feature>
<feature type="domain" description="ATP-grasp" evidence="1">
    <location>
        <begin position="104"/>
        <end position="287"/>
    </location>
</feature>
<feature type="binding site" evidence="1">
    <location>
        <position position="141"/>
    </location>
    <ligand>
        <name>ATP</name>
        <dbReference type="ChEBI" id="CHEBI:30616"/>
    </ligand>
</feature>
<feature type="binding site" evidence="1">
    <location>
        <begin position="178"/>
        <end position="179"/>
    </location>
    <ligand>
        <name>ATP</name>
        <dbReference type="ChEBI" id="CHEBI:30616"/>
    </ligand>
</feature>
<feature type="binding site" evidence="1">
    <location>
        <position position="187"/>
    </location>
    <ligand>
        <name>ATP</name>
        <dbReference type="ChEBI" id="CHEBI:30616"/>
    </ligand>
</feature>
<feature type="binding site" evidence="1">
    <location>
        <begin position="211"/>
        <end position="213"/>
    </location>
    <ligand>
        <name>ATP</name>
        <dbReference type="ChEBI" id="CHEBI:30616"/>
    </ligand>
</feature>
<feature type="binding site" evidence="1">
    <location>
        <position position="248"/>
    </location>
    <ligand>
        <name>Mg(2+)</name>
        <dbReference type="ChEBI" id="CHEBI:18420"/>
        <label>1</label>
    </ligand>
</feature>
<feature type="binding site" evidence="1">
    <location>
        <position position="248"/>
    </location>
    <ligand>
        <name>Mn(2+)</name>
        <dbReference type="ChEBI" id="CHEBI:29035"/>
        <label>1</label>
    </ligand>
</feature>
<feature type="binding site" evidence="1">
    <location>
        <position position="260"/>
    </location>
    <ligand>
        <name>Mg(2+)</name>
        <dbReference type="ChEBI" id="CHEBI:18420"/>
        <label>1</label>
    </ligand>
</feature>
<feature type="binding site" evidence="1">
    <location>
        <position position="260"/>
    </location>
    <ligand>
        <name>Mg(2+)</name>
        <dbReference type="ChEBI" id="CHEBI:18420"/>
        <label>2</label>
    </ligand>
</feature>
<feature type="binding site" evidence="1">
    <location>
        <position position="260"/>
    </location>
    <ligand>
        <name>Mn(2+)</name>
        <dbReference type="ChEBI" id="CHEBI:29035"/>
        <label>1</label>
    </ligand>
</feature>
<feature type="binding site" evidence="1">
    <location>
        <position position="260"/>
    </location>
    <ligand>
        <name>Mn(2+)</name>
        <dbReference type="ChEBI" id="CHEBI:29035"/>
        <label>2</label>
    </ligand>
</feature>
<feature type="binding site" evidence="1">
    <location>
        <position position="262"/>
    </location>
    <ligand>
        <name>Mg(2+)</name>
        <dbReference type="ChEBI" id="CHEBI:18420"/>
        <label>2</label>
    </ligand>
</feature>
<feature type="binding site" evidence="1">
    <location>
        <position position="262"/>
    </location>
    <ligand>
        <name>Mn(2+)</name>
        <dbReference type="ChEBI" id="CHEBI:29035"/>
        <label>2</label>
    </ligand>
</feature>
<name>RIMK_SALEP</name>
<dbReference type="EC" id="6.3.2.-" evidence="1"/>
<dbReference type="EMBL" id="AM933172">
    <property type="protein sequence ID" value="CAR32404.1"/>
    <property type="molecule type" value="Genomic_DNA"/>
</dbReference>
<dbReference type="RefSeq" id="WP_000684361.1">
    <property type="nucleotide sequence ID" value="NC_011294.1"/>
</dbReference>
<dbReference type="SMR" id="B5QYJ7"/>
<dbReference type="KEGG" id="set:SEN0821"/>
<dbReference type="HOGENOM" id="CLU_054353_0_1_6"/>
<dbReference type="Proteomes" id="UP000000613">
    <property type="component" value="Chromosome"/>
</dbReference>
<dbReference type="GO" id="GO:0005737">
    <property type="term" value="C:cytoplasm"/>
    <property type="evidence" value="ECO:0007669"/>
    <property type="project" value="TreeGrafter"/>
</dbReference>
<dbReference type="GO" id="GO:0005524">
    <property type="term" value="F:ATP binding"/>
    <property type="evidence" value="ECO:0007669"/>
    <property type="project" value="UniProtKB-UniRule"/>
</dbReference>
<dbReference type="GO" id="GO:0046872">
    <property type="term" value="F:metal ion binding"/>
    <property type="evidence" value="ECO:0007669"/>
    <property type="project" value="UniProtKB-KW"/>
</dbReference>
<dbReference type="GO" id="GO:0018169">
    <property type="term" value="F:ribosomal S6-glutamic acid ligase activity"/>
    <property type="evidence" value="ECO:0007669"/>
    <property type="project" value="UniProtKB-UniRule"/>
</dbReference>
<dbReference type="GO" id="GO:0036211">
    <property type="term" value="P:protein modification process"/>
    <property type="evidence" value="ECO:0007669"/>
    <property type="project" value="InterPro"/>
</dbReference>
<dbReference type="GO" id="GO:0009432">
    <property type="term" value="P:SOS response"/>
    <property type="evidence" value="ECO:0007669"/>
    <property type="project" value="TreeGrafter"/>
</dbReference>
<dbReference type="GO" id="GO:0006412">
    <property type="term" value="P:translation"/>
    <property type="evidence" value="ECO:0007669"/>
    <property type="project" value="UniProtKB-KW"/>
</dbReference>
<dbReference type="FunFam" id="3.40.50.20:FF:000004">
    <property type="entry name" value="Probable alpha-L-glutamate ligase"/>
    <property type="match status" value="1"/>
</dbReference>
<dbReference type="FunFam" id="3.30.1490.20:FF:000005">
    <property type="entry name" value="Probable alpha-L-glutamate ligase 1"/>
    <property type="match status" value="1"/>
</dbReference>
<dbReference type="FunFam" id="3.30.470.20:FF:000016">
    <property type="entry name" value="Ribosomal protein S6--L-glutamate ligase"/>
    <property type="match status" value="1"/>
</dbReference>
<dbReference type="Gene3D" id="3.40.50.20">
    <property type="match status" value="1"/>
</dbReference>
<dbReference type="Gene3D" id="3.30.1490.20">
    <property type="entry name" value="ATP-grasp fold, A domain"/>
    <property type="match status" value="1"/>
</dbReference>
<dbReference type="Gene3D" id="3.30.470.20">
    <property type="entry name" value="ATP-grasp fold, B domain"/>
    <property type="match status" value="1"/>
</dbReference>
<dbReference type="HAMAP" id="MF_01552">
    <property type="entry name" value="RimK"/>
    <property type="match status" value="1"/>
</dbReference>
<dbReference type="InterPro" id="IPR011761">
    <property type="entry name" value="ATP-grasp"/>
</dbReference>
<dbReference type="InterPro" id="IPR013651">
    <property type="entry name" value="ATP-grasp_RimK-type"/>
</dbReference>
<dbReference type="InterPro" id="IPR013815">
    <property type="entry name" value="ATP_grasp_subdomain_1"/>
</dbReference>
<dbReference type="InterPro" id="IPR023533">
    <property type="entry name" value="RimK"/>
</dbReference>
<dbReference type="InterPro" id="IPR041107">
    <property type="entry name" value="Rimk_N"/>
</dbReference>
<dbReference type="InterPro" id="IPR004666">
    <property type="entry name" value="Rp_bS6_RimK/Lys_biosynth_LsyX"/>
</dbReference>
<dbReference type="NCBIfam" id="NF007764">
    <property type="entry name" value="PRK10446.1"/>
    <property type="match status" value="1"/>
</dbReference>
<dbReference type="NCBIfam" id="TIGR00768">
    <property type="entry name" value="rimK_fam"/>
    <property type="match status" value="1"/>
</dbReference>
<dbReference type="PANTHER" id="PTHR21621:SF7">
    <property type="entry name" value="RIBOSOMAL PROTEIN BS6--L-GLUTAMATE LIGASE"/>
    <property type="match status" value="1"/>
</dbReference>
<dbReference type="PANTHER" id="PTHR21621">
    <property type="entry name" value="RIBOSOMAL PROTEIN S6 MODIFICATION PROTEIN"/>
    <property type="match status" value="1"/>
</dbReference>
<dbReference type="Pfam" id="PF08443">
    <property type="entry name" value="RimK"/>
    <property type="match status" value="1"/>
</dbReference>
<dbReference type="Pfam" id="PF18030">
    <property type="entry name" value="Rimk_N"/>
    <property type="match status" value="1"/>
</dbReference>
<dbReference type="SUPFAM" id="SSF56059">
    <property type="entry name" value="Glutathione synthetase ATP-binding domain-like"/>
    <property type="match status" value="1"/>
</dbReference>
<dbReference type="PROSITE" id="PS50975">
    <property type="entry name" value="ATP_GRASP"/>
    <property type="match status" value="1"/>
</dbReference>
<keyword id="KW-0067">ATP-binding</keyword>
<keyword id="KW-0436">Ligase</keyword>
<keyword id="KW-0460">Magnesium</keyword>
<keyword id="KW-0464">Manganese</keyword>
<keyword id="KW-0479">Metal-binding</keyword>
<keyword id="KW-0547">Nucleotide-binding</keyword>
<keyword id="KW-0648">Protein biosynthesis</keyword>
<reference key="1">
    <citation type="journal article" date="2008" name="Genome Res.">
        <title>Comparative genome analysis of Salmonella enteritidis PT4 and Salmonella gallinarum 287/91 provides insights into evolutionary and host adaptation pathways.</title>
        <authorList>
            <person name="Thomson N.R."/>
            <person name="Clayton D.J."/>
            <person name="Windhorst D."/>
            <person name="Vernikos G."/>
            <person name="Davidson S."/>
            <person name="Churcher C."/>
            <person name="Quail M.A."/>
            <person name="Stevens M."/>
            <person name="Jones M.A."/>
            <person name="Watson M."/>
            <person name="Barron A."/>
            <person name="Layton A."/>
            <person name="Pickard D."/>
            <person name="Kingsley R.A."/>
            <person name="Bignell A."/>
            <person name="Clark L."/>
            <person name="Harris B."/>
            <person name="Ormond D."/>
            <person name="Abdellah Z."/>
            <person name="Brooks K."/>
            <person name="Cherevach I."/>
            <person name="Chillingworth T."/>
            <person name="Woodward J."/>
            <person name="Norberczak H."/>
            <person name="Lord A."/>
            <person name="Arrowsmith C."/>
            <person name="Jagels K."/>
            <person name="Moule S."/>
            <person name="Mungall K."/>
            <person name="Saunders M."/>
            <person name="Whitehead S."/>
            <person name="Chabalgoity J.A."/>
            <person name="Maskell D."/>
            <person name="Humphreys T."/>
            <person name="Roberts M."/>
            <person name="Barrow P.A."/>
            <person name="Dougan G."/>
            <person name="Parkhill J."/>
        </authorList>
    </citation>
    <scope>NUCLEOTIDE SEQUENCE [LARGE SCALE GENOMIC DNA]</scope>
    <source>
        <strain>P125109</strain>
    </source>
</reference>
<evidence type="ECO:0000255" key="1">
    <source>
        <dbReference type="HAMAP-Rule" id="MF_01552"/>
    </source>
</evidence>
<proteinExistence type="inferred from homology"/>
<accession>B5QYJ7</accession>
<gene>
    <name evidence="1" type="primary">rimK</name>
    <name type="ordered locus">SEN0821</name>
</gene>
<organism>
    <name type="scientific">Salmonella enteritidis PT4 (strain P125109)</name>
    <dbReference type="NCBI Taxonomy" id="550537"/>
    <lineage>
        <taxon>Bacteria</taxon>
        <taxon>Pseudomonadati</taxon>
        <taxon>Pseudomonadota</taxon>
        <taxon>Gammaproteobacteria</taxon>
        <taxon>Enterobacterales</taxon>
        <taxon>Enterobacteriaceae</taxon>
        <taxon>Salmonella</taxon>
    </lineage>
</organism>
<protein>
    <recommendedName>
        <fullName evidence="1">Ribosomal protein bS6--L-glutamate ligase</fullName>
        <ecNumber evidence="1">6.3.2.-</ecNumber>
    </recommendedName>
    <alternativeName>
        <fullName evidence="1">Poly-alpha-glutamate synthase</fullName>
    </alternativeName>
    <alternativeName>
        <fullName evidence="1">Ribosomal protein bS6 modification protein</fullName>
    </alternativeName>
</protein>